<geneLocation type="chloroplast"/>
<protein>
    <recommendedName>
        <fullName evidence="1">Photosystem I reaction center subunit XII</fullName>
    </recommendedName>
    <alternativeName>
        <fullName evidence="1">PSI-M</fullName>
    </alternativeName>
</protein>
<comment type="subcellular location">
    <subcellularLocation>
        <location evidence="1">Plastid</location>
        <location evidence="1">Chloroplast thylakoid membrane</location>
        <topology evidence="1">Single-pass membrane protein</topology>
    </subcellularLocation>
</comment>
<comment type="similarity">
    <text evidence="1">Belongs to the PsaM family.</text>
</comment>
<organism>
    <name type="scientific">Gracilaria tenuistipitata var. liui</name>
    <name type="common">Red alga</name>
    <dbReference type="NCBI Taxonomy" id="285951"/>
    <lineage>
        <taxon>Eukaryota</taxon>
        <taxon>Rhodophyta</taxon>
        <taxon>Florideophyceae</taxon>
        <taxon>Rhodymeniophycidae</taxon>
        <taxon>Gracilariales</taxon>
        <taxon>Gracilariaceae</taxon>
        <taxon>Gracilaria</taxon>
        <taxon>Gracilaria tenuistipitata</taxon>
    </lineage>
</organism>
<feature type="chain" id="PRO_0000277390" description="Photosystem I reaction center subunit XII">
    <location>
        <begin position="1"/>
        <end position="30"/>
    </location>
</feature>
<feature type="transmembrane region" description="Helical" evidence="1">
    <location>
        <begin position="7"/>
        <end position="26"/>
    </location>
</feature>
<gene>
    <name evidence="1" type="primary">psaM</name>
    <name type="ordered locus">Grc000204</name>
</gene>
<accession>Q6B8K0</accession>
<keyword id="KW-0150">Chloroplast</keyword>
<keyword id="KW-0472">Membrane</keyword>
<keyword id="KW-0602">Photosynthesis</keyword>
<keyword id="KW-0603">Photosystem I</keyword>
<keyword id="KW-0934">Plastid</keyword>
<keyword id="KW-0793">Thylakoid</keyword>
<keyword id="KW-0812">Transmembrane</keyword>
<keyword id="KW-1133">Transmembrane helix</keyword>
<evidence type="ECO:0000255" key="1">
    <source>
        <dbReference type="HAMAP-Rule" id="MF_00828"/>
    </source>
</evidence>
<name>PSAM_GRATL</name>
<sequence>MISDSQIFVALLFALVSAVLAIRLGTDLYQ</sequence>
<reference key="1">
    <citation type="journal article" date="2004" name="J. Mol. Evol.">
        <title>Comparative analysis of the complete plastid genome sequence of the red alga Gracilaria tenuistipitata var. liui provides insights into the evolution of rhodoplasts and their relationship to other plastids.</title>
        <authorList>
            <person name="Hagopian J.C."/>
            <person name="Reis M."/>
            <person name="Kitajima J.P."/>
            <person name="Bhattacharya D."/>
            <person name="de Oliveira M.C."/>
        </authorList>
    </citation>
    <scope>NUCLEOTIDE SEQUENCE [LARGE SCALE GENOMIC DNA]</scope>
</reference>
<proteinExistence type="inferred from homology"/>
<dbReference type="EMBL" id="AY673996">
    <property type="protein sequence ID" value="AAT79785.1"/>
    <property type="molecule type" value="Genomic_DNA"/>
</dbReference>
<dbReference type="RefSeq" id="YP_063710.1">
    <property type="nucleotide sequence ID" value="NC_006137.1"/>
</dbReference>
<dbReference type="SMR" id="Q6B8K0"/>
<dbReference type="GeneID" id="2943954"/>
<dbReference type="GO" id="GO:0009535">
    <property type="term" value="C:chloroplast thylakoid membrane"/>
    <property type="evidence" value="ECO:0007669"/>
    <property type="project" value="UniProtKB-SubCell"/>
</dbReference>
<dbReference type="GO" id="GO:0009522">
    <property type="term" value="C:photosystem I"/>
    <property type="evidence" value="ECO:0007669"/>
    <property type="project" value="UniProtKB-KW"/>
</dbReference>
<dbReference type="GO" id="GO:0015979">
    <property type="term" value="P:photosynthesis"/>
    <property type="evidence" value="ECO:0007669"/>
    <property type="project" value="UniProtKB-UniRule"/>
</dbReference>
<dbReference type="HAMAP" id="MF_00828">
    <property type="entry name" value="PSI_PsaM"/>
    <property type="match status" value="1"/>
</dbReference>
<dbReference type="InterPro" id="IPR010010">
    <property type="entry name" value="PSI_PsaM"/>
</dbReference>
<dbReference type="InterPro" id="IPR037279">
    <property type="entry name" value="PSI_PsaM_sf"/>
</dbReference>
<dbReference type="NCBIfam" id="TIGR03053">
    <property type="entry name" value="PS_I_psaM"/>
    <property type="match status" value="1"/>
</dbReference>
<dbReference type="Pfam" id="PF07465">
    <property type="entry name" value="PsaM"/>
    <property type="match status" value="1"/>
</dbReference>
<dbReference type="SUPFAM" id="SSF81548">
    <property type="entry name" value="Subunit XII of photosystem I reaction centre, PsaM"/>
    <property type="match status" value="1"/>
</dbReference>